<organism>
    <name type="scientific">Ovis aries</name>
    <name type="common">Sheep</name>
    <dbReference type="NCBI Taxonomy" id="9940"/>
    <lineage>
        <taxon>Eukaryota</taxon>
        <taxon>Metazoa</taxon>
        <taxon>Chordata</taxon>
        <taxon>Craniata</taxon>
        <taxon>Vertebrata</taxon>
        <taxon>Euteleostomi</taxon>
        <taxon>Mammalia</taxon>
        <taxon>Eutheria</taxon>
        <taxon>Laurasiatheria</taxon>
        <taxon>Artiodactyla</taxon>
        <taxon>Ruminantia</taxon>
        <taxon>Pecora</taxon>
        <taxon>Bovidae</taxon>
        <taxon>Caprinae</taxon>
        <taxon>Ovis</taxon>
    </lineage>
</organism>
<gene>
    <name type="primary">MC1R</name>
</gene>
<dbReference type="EMBL" id="Y13965">
    <property type="protein sequence ID" value="CAA74298.1"/>
    <property type="molecule type" value="Genomic_DNA"/>
</dbReference>
<dbReference type="RefSeq" id="NP_001269457.1">
    <property type="nucleotide sequence ID" value="NM_001282528.1"/>
</dbReference>
<dbReference type="SMR" id="O19037"/>
<dbReference type="STRING" id="9940.ENSOARP00000016014"/>
<dbReference type="GlyCosmos" id="O19037">
    <property type="glycosylation" value="1 site, No reported glycans"/>
</dbReference>
<dbReference type="Ensembl" id="ENSOART00220069639">
    <property type="protein sequence ID" value="ENSOARP00220037788"/>
    <property type="gene ID" value="ENSOARG00220041809"/>
</dbReference>
<dbReference type="GeneID" id="102099064"/>
<dbReference type="KEGG" id="oas:102099064"/>
<dbReference type="CTD" id="4157"/>
<dbReference type="eggNOG" id="KOG3656">
    <property type="taxonomic scope" value="Eukaryota"/>
</dbReference>
<dbReference type="OrthoDB" id="5970330at2759"/>
<dbReference type="Proteomes" id="UP000002356">
    <property type="component" value="Unplaced"/>
</dbReference>
<dbReference type="GO" id="GO:0005886">
    <property type="term" value="C:plasma membrane"/>
    <property type="evidence" value="ECO:0000250"/>
    <property type="project" value="UniProtKB"/>
</dbReference>
<dbReference type="GO" id="GO:0004980">
    <property type="term" value="F:melanocyte-stimulating hormone receptor activity"/>
    <property type="evidence" value="ECO:0007669"/>
    <property type="project" value="Ensembl"/>
</dbReference>
<dbReference type="GO" id="GO:0031625">
    <property type="term" value="F:ubiquitin protein ligase binding"/>
    <property type="evidence" value="ECO:0007669"/>
    <property type="project" value="Ensembl"/>
</dbReference>
<dbReference type="GO" id="GO:0007189">
    <property type="term" value="P:adenylate cyclase-activating G protein-coupled receptor signaling pathway"/>
    <property type="evidence" value="ECO:0007669"/>
    <property type="project" value="Ensembl"/>
</dbReference>
<dbReference type="GO" id="GO:0035556">
    <property type="term" value="P:intracellular signal transduction"/>
    <property type="evidence" value="ECO:0007669"/>
    <property type="project" value="Ensembl"/>
</dbReference>
<dbReference type="GO" id="GO:0042438">
    <property type="term" value="P:melanin biosynthetic process"/>
    <property type="evidence" value="ECO:0007669"/>
    <property type="project" value="Ensembl"/>
</dbReference>
<dbReference type="GO" id="GO:0032720">
    <property type="term" value="P:negative regulation of tumor necrosis factor production"/>
    <property type="evidence" value="ECO:0007669"/>
    <property type="project" value="Ensembl"/>
</dbReference>
<dbReference type="GO" id="GO:0007200">
    <property type="term" value="P:phospholipase C-activating G protein-coupled receptor signaling pathway"/>
    <property type="evidence" value="ECO:0007669"/>
    <property type="project" value="Ensembl"/>
</dbReference>
<dbReference type="GO" id="GO:0141163">
    <property type="term" value="P:positive regulation of cAMP/PKA signal transduction"/>
    <property type="evidence" value="ECO:0007669"/>
    <property type="project" value="Ensembl"/>
</dbReference>
<dbReference type="GO" id="GO:0045944">
    <property type="term" value="P:positive regulation of transcription by RNA polymerase II"/>
    <property type="evidence" value="ECO:0007669"/>
    <property type="project" value="Ensembl"/>
</dbReference>
<dbReference type="GO" id="GO:0019233">
    <property type="term" value="P:sensory perception of pain"/>
    <property type="evidence" value="ECO:0007669"/>
    <property type="project" value="Ensembl"/>
</dbReference>
<dbReference type="GO" id="GO:0070914">
    <property type="term" value="P:UV-damage excision repair"/>
    <property type="evidence" value="ECO:0007669"/>
    <property type="project" value="Ensembl"/>
</dbReference>
<dbReference type="CDD" id="cd15351">
    <property type="entry name" value="7tmA_MC1R"/>
    <property type="match status" value="1"/>
</dbReference>
<dbReference type="FunFam" id="1.20.1070.10:FF:000211">
    <property type="entry name" value="Melanocyte-stimulating hormone receptor"/>
    <property type="match status" value="1"/>
</dbReference>
<dbReference type="Gene3D" id="1.20.1070.10">
    <property type="entry name" value="Rhodopsin 7-helix transmembrane proteins"/>
    <property type="match status" value="1"/>
</dbReference>
<dbReference type="InterPro" id="IPR000276">
    <property type="entry name" value="GPCR_Rhodpsn"/>
</dbReference>
<dbReference type="InterPro" id="IPR017452">
    <property type="entry name" value="GPCR_Rhodpsn_7TM"/>
</dbReference>
<dbReference type="InterPro" id="IPR001671">
    <property type="entry name" value="Melcrt_ACTH_rcpt"/>
</dbReference>
<dbReference type="InterPro" id="IPR000761">
    <property type="entry name" value="MSH_rcpt"/>
</dbReference>
<dbReference type="PANTHER" id="PTHR22750">
    <property type="entry name" value="G-PROTEIN COUPLED RECEPTOR"/>
    <property type="match status" value="1"/>
</dbReference>
<dbReference type="Pfam" id="PF00001">
    <property type="entry name" value="7tm_1"/>
    <property type="match status" value="1"/>
</dbReference>
<dbReference type="PRINTS" id="PR00237">
    <property type="entry name" value="GPCRRHODOPSN"/>
</dbReference>
<dbReference type="PRINTS" id="PR00534">
    <property type="entry name" value="MCRFAMILY"/>
</dbReference>
<dbReference type="PRINTS" id="PR00536">
    <property type="entry name" value="MELNOCYTESHR"/>
</dbReference>
<dbReference type="SMART" id="SM01381">
    <property type="entry name" value="7TM_GPCR_Srsx"/>
    <property type="match status" value="1"/>
</dbReference>
<dbReference type="SUPFAM" id="SSF81321">
    <property type="entry name" value="Family A G protein-coupled receptor-like"/>
    <property type="match status" value="1"/>
</dbReference>
<dbReference type="PROSITE" id="PS00237">
    <property type="entry name" value="G_PROTEIN_RECEP_F1_1"/>
    <property type="match status" value="1"/>
</dbReference>
<dbReference type="PROSITE" id="PS50262">
    <property type="entry name" value="G_PROTEIN_RECEP_F1_2"/>
    <property type="match status" value="1"/>
</dbReference>
<sequence length="317" mass="34919">MPVLGSQRRLLGSLNCTPPATLPLTLAPNRTGPQCLEVSIPDGLFLSLGLVSLVENVLVVAAIAKNRNLHSPMYYFICCLAMSDLLVSVSNVLETAVMLLLEAGVLATRAAVVQQLDNVIDVLICSSMVSSLCFLGAIAVDRYISIFYALRYHSVVTLPRAWRIIAAIWVASILTSVLSITYYNHTVVLLCLVGFFIAMLALMAVLYVHMLARACQHARGIARLQKRQRPIHQGFGLKGAATLTILLGVFFLCWGPFFLHLSLIVLCPQHPTCGCIFKNFNLFLALIICNAIVDPLIYAFRSQELRKTLQEVLQCSW</sequence>
<comment type="function">
    <text evidence="1">Receptor for MSH (alpha, beta and gamma) and ACTH. The activity of this receptor is mediated by G proteins which activate adenylate cyclase. Mediates melanogenesis, the production of eumelanin (black/brown) and phaeomelanin (red/yellow), via regulation of cAMP signaling in melanocytes.</text>
</comment>
<comment type="subunit">
    <text evidence="1">Interacts with MGRN1, but does not undergo MGRN1-mediated ubiquitination; this interaction competes with GNAS-binding and thus inhibits agonist-induced cAMP production. Interacts with OPN3; the interaction results in a decrease in MC1R-mediated cAMP signaling and ultimately a decrease in melanin production in melanocytes.</text>
</comment>
<comment type="subcellular location">
    <subcellularLocation>
        <location evidence="1">Cell membrane</location>
        <topology evidence="2">Multi-pass membrane protein</topology>
    </subcellularLocation>
</comment>
<comment type="similarity">
    <text evidence="3">Belongs to the G-protein coupled receptor 1 family.</text>
</comment>
<keyword id="KW-1003">Cell membrane</keyword>
<keyword id="KW-0297">G-protein coupled receptor</keyword>
<keyword id="KW-0325">Glycoprotein</keyword>
<keyword id="KW-0449">Lipoprotein</keyword>
<keyword id="KW-0472">Membrane</keyword>
<keyword id="KW-0564">Palmitate</keyword>
<keyword id="KW-0675">Receptor</keyword>
<keyword id="KW-1185">Reference proteome</keyword>
<keyword id="KW-0807">Transducer</keyword>
<keyword id="KW-0812">Transmembrane</keyword>
<keyword id="KW-1133">Transmembrane helix</keyword>
<feature type="chain" id="PRO_0000069851" description="Melanocyte-stimulating hormone receptor">
    <location>
        <begin position="1"/>
        <end position="317"/>
    </location>
</feature>
<feature type="topological domain" description="Extracellular" evidence="2">
    <location>
        <begin position="1"/>
        <end position="37"/>
    </location>
</feature>
<feature type="transmembrane region" description="Helical; Name=1" evidence="2">
    <location>
        <begin position="38"/>
        <end position="63"/>
    </location>
</feature>
<feature type="topological domain" description="Cytoplasmic" evidence="2">
    <location>
        <begin position="64"/>
        <end position="72"/>
    </location>
</feature>
<feature type="transmembrane region" description="Helical; Name=2" evidence="2">
    <location>
        <begin position="73"/>
        <end position="93"/>
    </location>
</feature>
<feature type="topological domain" description="Extracellular" evidence="2">
    <location>
        <begin position="94"/>
        <end position="118"/>
    </location>
</feature>
<feature type="transmembrane region" description="Helical; Name=3" evidence="2">
    <location>
        <begin position="119"/>
        <end position="140"/>
    </location>
</feature>
<feature type="topological domain" description="Cytoplasmic" evidence="2">
    <location>
        <begin position="141"/>
        <end position="163"/>
    </location>
</feature>
<feature type="transmembrane region" description="Helical; Name=4" evidence="2">
    <location>
        <begin position="164"/>
        <end position="183"/>
    </location>
</feature>
<feature type="topological domain" description="Extracellular" evidence="2">
    <location>
        <begin position="184"/>
        <end position="191"/>
    </location>
</feature>
<feature type="transmembrane region" description="Helical; Name=5" evidence="2">
    <location>
        <begin position="192"/>
        <end position="211"/>
    </location>
</feature>
<feature type="topological domain" description="Cytoplasmic" evidence="2">
    <location>
        <begin position="212"/>
        <end position="240"/>
    </location>
</feature>
<feature type="transmembrane region" description="Helical; Name=6" evidence="2">
    <location>
        <begin position="241"/>
        <end position="266"/>
    </location>
</feature>
<feature type="topological domain" description="Extracellular" evidence="2">
    <location>
        <begin position="267"/>
        <end position="279"/>
    </location>
</feature>
<feature type="transmembrane region" description="Helical; Name=7" evidence="2">
    <location>
        <begin position="280"/>
        <end position="300"/>
    </location>
</feature>
<feature type="topological domain" description="Cytoplasmic" evidence="2">
    <location>
        <begin position="301"/>
        <end position="317"/>
    </location>
</feature>
<feature type="lipid moiety-binding region" description="S-palmitoyl cysteine" evidence="2">
    <location>
        <position position="315"/>
    </location>
</feature>
<feature type="glycosylation site" description="N-linked (GlcNAc...) asparagine" evidence="2">
    <location>
        <position position="29"/>
    </location>
</feature>
<evidence type="ECO:0000250" key="1">
    <source>
        <dbReference type="UniProtKB" id="Q01726"/>
    </source>
</evidence>
<evidence type="ECO:0000255" key="2"/>
<evidence type="ECO:0000255" key="3">
    <source>
        <dbReference type="PROSITE-ProRule" id="PRU00521"/>
    </source>
</evidence>
<accession>O19037</accession>
<reference key="1">
    <citation type="journal article" date="1999" name="Hereditas">
        <title>The melanocyte-stimulating hormone receptor (MC1-R) gene as a tool in evolutionary studies of artiodactyles.</title>
        <authorList>
            <person name="Klungland H."/>
            <person name="Roed K.H."/>
            <person name="Nesbo C.L."/>
            <person name="Jakobsen K.S."/>
            <person name="Vage D.I."/>
        </authorList>
    </citation>
    <scope>NUCLEOTIDE SEQUENCE [GENOMIC DNA]</scope>
</reference>
<name>MSHR_SHEEP</name>
<protein>
    <recommendedName>
        <fullName>Melanocyte-stimulating hormone receptor</fullName>
        <shortName>MSH-R</shortName>
    </recommendedName>
    <alternativeName>
        <fullName>Melanocortin receptor 1</fullName>
        <shortName>MC1-R</shortName>
    </alternativeName>
</protein>
<proteinExistence type="inferred from homology"/>